<comment type="catalytic activity">
    <reaction>
        <text>tRNA(Cys) + L-cysteine + ATP = L-cysteinyl-tRNA(Cys) + AMP + diphosphate</text>
        <dbReference type="Rhea" id="RHEA:17773"/>
        <dbReference type="Rhea" id="RHEA-COMP:9661"/>
        <dbReference type="Rhea" id="RHEA-COMP:9679"/>
        <dbReference type="ChEBI" id="CHEBI:30616"/>
        <dbReference type="ChEBI" id="CHEBI:33019"/>
        <dbReference type="ChEBI" id="CHEBI:35235"/>
        <dbReference type="ChEBI" id="CHEBI:78442"/>
        <dbReference type="ChEBI" id="CHEBI:78517"/>
        <dbReference type="ChEBI" id="CHEBI:456215"/>
        <dbReference type="EC" id="6.1.1.16"/>
    </reaction>
</comment>
<comment type="cofactor">
    <cofactor evidence="1">
        <name>Zn(2+)</name>
        <dbReference type="ChEBI" id="CHEBI:29105"/>
    </cofactor>
    <text evidence="1">Binds 1 zinc ion per subunit.</text>
</comment>
<comment type="subunit">
    <text evidence="1">Monomer.</text>
</comment>
<comment type="subcellular location">
    <subcellularLocation>
        <location evidence="1">Cytoplasm</location>
    </subcellularLocation>
</comment>
<comment type="similarity">
    <text evidence="2">Belongs to the class-I aminoacyl-tRNA synthetase family.</text>
</comment>
<gene>
    <name type="primary">cysS</name>
    <name type="ordered locus">slr0958</name>
</gene>
<keyword id="KW-0030">Aminoacyl-tRNA synthetase</keyword>
<keyword id="KW-0067">ATP-binding</keyword>
<keyword id="KW-0963">Cytoplasm</keyword>
<keyword id="KW-0436">Ligase</keyword>
<keyword id="KW-0479">Metal-binding</keyword>
<keyword id="KW-0547">Nucleotide-binding</keyword>
<keyword id="KW-0648">Protein biosynthesis</keyword>
<keyword id="KW-1185">Reference proteome</keyword>
<keyword id="KW-0862">Zinc</keyword>
<evidence type="ECO:0000250" key="1"/>
<evidence type="ECO:0000305" key="2"/>
<dbReference type="EC" id="6.1.1.16"/>
<dbReference type="EMBL" id="BA000022">
    <property type="protein sequence ID" value="BAA18424.1"/>
    <property type="molecule type" value="Genomic_DNA"/>
</dbReference>
<dbReference type="PIR" id="S76165">
    <property type="entry name" value="S76165"/>
</dbReference>
<dbReference type="SMR" id="P74330"/>
<dbReference type="FunCoup" id="P74330">
    <property type="interactions" value="398"/>
</dbReference>
<dbReference type="IntAct" id="P74330">
    <property type="interactions" value="1"/>
</dbReference>
<dbReference type="STRING" id="1148.gene:10499300"/>
<dbReference type="PaxDb" id="1148-1653511"/>
<dbReference type="EnsemblBacteria" id="BAA18424">
    <property type="protein sequence ID" value="BAA18424"/>
    <property type="gene ID" value="BAA18424"/>
</dbReference>
<dbReference type="KEGG" id="syn:slr0958"/>
<dbReference type="eggNOG" id="COG0215">
    <property type="taxonomic scope" value="Bacteria"/>
</dbReference>
<dbReference type="InParanoid" id="P74330"/>
<dbReference type="PhylomeDB" id="P74330"/>
<dbReference type="Proteomes" id="UP000001425">
    <property type="component" value="Chromosome"/>
</dbReference>
<dbReference type="GO" id="GO:0005737">
    <property type="term" value="C:cytoplasm"/>
    <property type="evidence" value="ECO:0007669"/>
    <property type="project" value="UniProtKB-SubCell"/>
</dbReference>
<dbReference type="GO" id="GO:0005524">
    <property type="term" value="F:ATP binding"/>
    <property type="evidence" value="ECO:0007669"/>
    <property type="project" value="UniProtKB-UniRule"/>
</dbReference>
<dbReference type="GO" id="GO:0004817">
    <property type="term" value="F:cysteine-tRNA ligase activity"/>
    <property type="evidence" value="ECO:0007669"/>
    <property type="project" value="UniProtKB-UniRule"/>
</dbReference>
<dbReference type="GO" id="GO:0004825">
    <property type="term" value="F:methionine-tRNA ligase activity"/>
    <property type="evidence" value="ECO:0000318"/>
    <property type="project" value="GO_Central"/>
</dbReference>
<dbReference type="GO" id="GO:0008270">
    <property type="term" value="F:zinc ion binding"/>
    <property type="evidence" value="ECO:0007669"/>
    <property type="project" value="UniProtKB-UniRule"/>
</dbReference>
<dbReference type="GO" id="GO:0006423">
    <property type="term" value="P:cysteinyl-tRNA aminoacylation"/>
    <property type="evidence" value="ECO:0007669"/>
    <property type="project" value="UniProtKB-UniRule"/>
</dbReference>
<dbReference type="GO" id="GO:0006431">
    <property type="term" value="P:methionyl-tRNA aminoacylation"/>
    <property type="evidence" value="ECO:0000318"/>
    <property type="project" value="GO_Central"/>
</dbReference>
<dbReference type="CDD" id="cd00672">
    <property type="entry name" value="CysRS_core"/>
    <property type="match status" value="1"/>
</dbReference>
<dbReference type="FunFam" id="3.40.50.620:FF:000009">
    <property type="entry name" value="Cysteine--tRNA ligase"/>
    <property type="match status" value="1"/>
</dbReference>
<dbReference type="Gene3D" id="1.20.120.1910">
    <property type="entry name" value="Cysteine-tRNA ligase, C-terminal anti-codon recognition domain"/>
    <property type="match status" value="1"/>
</dbReference>
<dbReference type="Gene3D" id="3.40.50.620">
    <property type="entry name" value="HUPs"/>
    <property type="match status" value="1"/>
</dbReference>
<dbReference type="HAMAP" id="MF_00041">
    <property type="entry name" value="Cys_tRNA_synth"/>
    <property type="match status" value="1"/>
</dbReference>
<dbReference type="InterPro" id="IPR015803">
    <property type="entry name" value="Cys-tRNA-ligase"/>
</dbReference>
<dbReference type="InterPro" id="IPR015273">
    <property type="entry name" value="Cys-tRNA-synt_Ia_DALR"/>
</dbReference>
<dbReference type="InterPro" id="IPR024909">
    <property type="entry name" value="Cys-tRNA/MSH_ligase"/>
</dbReference>
<dbReference type="InterPro" id="IPR056411">
    <property type="entry name" value="CysS_C"/>
</dbReference>
<dbReference type="InterPro" id="IPR014729">
    <property type="entry name" value="Rossmann-like_a/b/a_fold"/>
</dbReference>
<dbReference type="InterPro" id="IPR032678">
    <property type="entry name" value="tRNA-synt_1_cat_dom"/>
</dbReference>
<dbReference type="InterPro" id="IPR009080">
    <property type="entry name" value="tRNAsynth_Ia_anticodon-bd"/>
</dbReference>
<dbReference type="NCBIfam" id="TIGR00435">
    <property type="entry name" value="cysS"/>
    <property type="match status" value="1"/>
</dbReference>
<dbReference type="PANTHER" id="PTHR10890:SF3">
    <property type="entry name" value="CYSTEINE--TRNA LIGASE, CYTOPLASMIC"/>
    <property type="match status" value="1"/>
</dbReference>
<dbReference type="PANTHER" id="PTHR10890">
    <property type="entry name" value="CYSTEINYL-TRNA SYNTHETASE"/>
    <property type="match status" value="1"/>
</dbReference>
<dbReference type="Pfam" id="PF23493">
    <property type="entry name" value="CysS_C"/>
    <property type="match status" value="1"/>
</dbReference>
<dbReference type="Pfam" id="PF09190">
    <property type="entry name" value="DALR_2"/>
    <property type="match status" value="1"/>
</dbReference>
<dbReference type="Pfam" id="PF01406">
    <property type="entry name" value="tRNA-synt_1e"/>
    <property type="match status" value="1"/>
</dbReference>
<dbReference type="PRINTS" id="PR00983">
    <property type="entry name" value="TRNASYNTHCYS"/>
</dbReference>
<dbReference type="SMART" id="SM00840">
    <property type="entry name" value="DALR_2"/>
    <property type="match status" value="1"/>
</dbReference>
<dbReference type="SUPFAM" id="SSF47323">
    <property type="entry name" value="Anticodon-binding domain of a subclass of class I aminoacyl-tRNA synthetases"/>
    <property type="match status" value="1"/>
</dbReference>
<dbReference type="SUPFAM" id="SSF52374">
    <property type="entry name" value="Nucleotidylyl transferase"/>
    <property type="match status" value="1"/>
</dbReference>
<protein>
    <recommendedName>
        <fullName>Cysteine--tRNA ligase</fullName>
        <ecNumber>6.1.1.16</ecNumber>
    </recommendedName>
    <alternativeName>
        <fullName>Cysteinyl-tRNA synthetase</fullName>
        <shortName>CysRS</shortName>
    </alternativeName>
</protein>
<accession>P74330</accession>
<sequence length="483" mass="53968">MTLRLYDSLTRAKQPLQPLHPGLVTMYCCGITVYDYCHLGHARTCITWDLVRRYLQWSGYEVRYVQNFTDIDDKILKRAVDESSTMEAVSEKFIAAYFEDMEALGVQPADLYPRATHTLDGIKRLIAELEAKGYAYPSGGDVYYSVRNFDGYGKLSGRRLEDLQAGASGRVTVADPDGAQKQDPFDFALWKSAKPGEPAWESPWGKGRPGWHIECSAMVREFLGETIDLHVGGNDLIFPHHENEIAQSEAVTGQPLAQYWLHNGMVKVDGEKMSKSLGNFTTIRALLKTVDPMAIRLLVLQGHYRKPLDFTETAIAAATNGWHTLREGLQFGYDYGGDFGWELAFTPLGPDANQWTVAFQEAVDDDFNFAGGLAVMFELAKHLRSEGNKLKFEGSTPADLDLLQTQWITLVSLAEILGLSINPESQSSNDNGLTDGDIEQLVAQRTQARKDKNWAEGDRLRDVLQEAGITLVDKPGGLTEWFR</sequence>
<proteinExistence type="inferred from homology"/>
<organism>
    <name type="scientific">Synechocystis sp. (strain ATCC 27184 / PCC 6803 / Kazusa)</name>
    <dbReference type="NCBI Taxonomy" id="1111708"/>
    <lineage>
        <taxon>Bacteria</taxon>
        <taxon>Bacillati</taxon>
        <taxon>Cyanobacteriota</taxon>
        <taxon>Cyanophyceae</taxon>
        <taxon>Synechococcales</taxon>
        <taxon>Merismopediaceae</taxon>
        <taxon>Synechocystis</taxon>
    </lineage>
</organism>
<name>SYC_SYNY3</name>
<feature type="chain" id="PRO_0000159505" description="Cysteine--tRNA ligase">
    <location>
        <begin position="1"/>
        <end position="483"/>
    </location>
</feature>
<feature type="short sequence motif" description="'HIGH' region">
    <location>
        <begin position="31"/>
        <end position="41"/>
    </location>
</feature>
<feature type="short sequence motif" description="'KMSKS' region">
    <location>
        <begin position="272"/>
        <end position="276"/>
    </location>
</feature>
<feature type="binding site" evidence="1">
    <location>
        <position position="29"/>
    </location>
    <ligand>
        <name>Zn(2+)</name>
        <dbReference type="ChEBI" id="CHEBI:29105"/>
    </ligand>
</feature>
<feature type="binding site" evidence="1">
    <location>
        <position position="215"/>
    </location>
    <ligand>
        <name>Zn(2+)</name>
        <dbReference type="ChEBI" id="CHEBI:29105"/>
    </ligand>
</feature>
<feature type="binding site" evidence="1">
    <location>
        <position position="240"/>
    </location>
    <ligand>
        <name>Zn(2+)</name>
        <dbReference type="ChEBI" id="CHEBI:29105"/>
    </ligand>
</feature>
<feature type="binding site" evidence="1">
    <location>
        <position position="244"/>
    </location>
    <ligand>
        <name>Zn(2+)</name>
        <dbReference type="ChEBI" id="CHEBI:29105"/>
    </ligand>
</feature>
<feature type="binding site" evidence="1">
    <location>
        <position position="275"/>
    </location>
    <ligand>
        <name>ATP</name>
        <dbReference type="ChEBI" id="CHEBI:30616"/>
    </ligand>
</feature>
<reference key="1">
    <citation type="journal article" date="1996" name="DNA Res.">
        <title>Sequence analysis of the genome of the unicellular cyanobacterium Synechocystis sp. strain PCC6803. II. Sequence determination of the entire genome and assignment of potential protein-coding regions.</title>
        <authorList>
            <person name="Kaneko T."/>
            <person name="Sato S."/>
            <person name="Kotani H."/>
            <person name="Tanaka A."/>
            <person name="Asamizu E."/>
            <person name="Nakamura Y."/>
            <person name="Miyajima N."/>
            <person name="Hirosawa M."/>
            <person name="Sugiura M."/>
            <person name="Sasamoto S."/>
            <person name="Kimura T."/>
            <person name="Hosouchi T."/>
            <person name="Matsuno A."/>
            <person name="Muraki A."/>
            <person name="Nakazaki N."/>
            <person name="Naruo K."/>
            <person name="Okumura S."/>
            <person name="Shimpo S."/>
            <person name="Takeuchi C."/>
            <person name="Wada T."/>
            <person name="Watanabe A."/>
            <person name="Yamada M."/>
            <person name="Yasuda M."/>
            <person name="Tabata S."/>
        </authorList>
    </citation>
    <scope>NUCLEOTIDE SEQUENCE [LARGE SCALE GENOMIC DNA]</scope>
    <source>
        <strain>ATCC 27184 / PCC 6803 / Kazusa</strain>
    </source>
</reference>